<keyword id="KW-0687">Ribonucleoprotein</keyword>
<keyword id="KW-0689">Ribosomal protein</keyword>
<keyword id="KW-0694">RNA-binding</keyword>
<keyword id="KW-0699">rRNA-binding</keyword>
<dbReference type="EMBL" id="AP006861">
    <property type="protein sequence ID" value="BAE81679.1"/>
    <property type="molecule type" value="Genomic_DNA"/>
</dbReference>
<dbReference type="RefSeq" id="WP_011458452.1">
    <property type="nucleotide sequence ID" value="NC_007899.1"/>
</dbReference>
<dbReference type="SMR" id="Q252V9"/>
<dbReference type="STRING" id="264202.CF0907"/>
<dbReference type="KEGG" id="cfe:CF0907"/>
<dbReference type="eggNOG" id="COG0092">
    <property type="taxonomic scope" value="Bacteria"/>
</dbReference>
<dbReference type="HOGENOM" id="CLU_058591_0_2_0"/>
<dbReference type="OrthoDB" id="9806396at2"/>
<dbReference type="Proteomes" id="UP000001260">
    <property type="component" value="Chromosome"/>
</dbReference>
<dbReference type="GO" id="GO:0022627">
    <property type="term" value="C:cytosolic small ribosomal subunit"/>
    <property type="evidence" value="ECO:0007669"/>
    <property type="project" value="TreeGrafter"/>
</dbReference>
<dbReference type="GO" id="GO:0003729">
    <property type="term" value="F:mRNA binding"/>
    <property type="evidence" value="ECO:0007669"/>
    <property type="project" value="UniProtKB-UniRule"/>
</dbReference>
<dbReference type="GO" id="GO:0019843">
    <property type="term" value="F:rRNA binding"/>
    <property type="evidence" value="ECO:0007669"/>
    <property type="project" value="UniProtKB-UniRule"/>
</dbReference>
<dbReference type="GO" id="GO:0003735">
    <property type="term" value="F:structural constituent of ribosome"/>
    <property type="evidence" value="ECO:0007669"/>
    <property type="project" value="InterPro"/>
</dbReference>
<dbReference type="GO" id="GO:0006412">
    <property type="term" value="P:translation"/>
    <property type="evidence" value="ECO:0007669"/>
    <property type="project" value="UniProtKB-UniRule"/>
</dbReference>
<dbReference type="CDD" id="cd02412">
    <property type="entry name" value="KH-II_30S_S3"/>
    <property type="match status" value="1"/>
</dbReference>
<dbReference type="FunFam" id="3.30.300.20:FF:000001">
    <property type="entry name" value="30S ribosomal protein S3"/>
    <property type="match status" value="1"/>
</dbReference>
<dbReference type="Gene3D" id="3.30.300.20">
    <property type="match status" value="1"/>
</dbReference>
<dbReference type="Gene3D" id="3.30.1140.32">
    <property type="entry name" value="Ribosomal protein S3, C-terminal domain"/>
    <property type="match status" value="1"/>
</dbReference>
<dbReference type="HAMAP" id="MF_01309_B">
    <property type="entry name" value="Ribosomal_uS3_B"/>
    <property type="match status" value="1"/>
</dbReference>
<dbReference type="InterPro" id="IPR004087">
    <property type="entry name" value="KH_dom"/>
</dbReference>
<dbReference type="InterPro" id="IPR015946">
    <property type="entry name" value="KH_dom-like_a/b"/>
</dbReference>
<dbReference type="InterPro" id="IPR004044">
    <property type="entry name" value="KH_dom_type_2"/>
</dbReference>
<dbReference type="InterPro" id="IPR009019">
    <property type="entry name" value="KH_sf_prok-type"/>
</dbReference>
<dbReference type="InterPro" id="IPR036419">
    <property type="entry name" value="Ribosomal_S3_C_sf"/>
</dbReference>
<dbReference type="InterPro" id="IPR005704">
    <property type="entry name" value="Ribosomal_uS3_bac-typ"/>
</dbReference>
<dbReference type="InterPro" id="IPR001351">
    <property type="entry name" value="Ribosomal_uS3_C"/>
</dbReference>
<dbReference type="InterPro" id="IPR018280">
    <property type="entry name" value="Ribosomal_uS3_CS"/>
</dbReference>
<dbReference type="NCBIfam" id="TIGR01009">
    <property type="entry name" value="rpsC_bact"/>
    <property type="match status" value="1"/>
</dbReference>
<dbReference type="PANTHER" id="PTHR11760">
    <property type="entry name" value="30S/40S RIBOSOMAL PROTEIN S3"/>
    <property type="match status" value="1"/>
</dbReference>
<dbReference type="PANTHER" id="PTHR11760:SF19">
    <property type="entry name" value="SMALL RIBOSOMAL SUBUNIT PROTEIN US3C"/>
    <property type="match status" value="1"/>
</dbReference>
<dbReference type="Pfam" id="PF07650">
    <property type="entry name" value="KH_2"/>
    <property type="match status" value="1"/>
</dbReference>
<dbReference type="Pfam" id="PF00189">
    <property type="entry name" value="Ribosomal_S3_C"/>
    <property type="match status" value="1"/>
</dbReference>
<dbReference type="SMART" id="SM00322">
    <property type="entry name" value="KH"/>
    <property type="match status" value="1"/>
</dbReference>
<dbReference type="SUPFAM" id="SSF54814">
    <property type="entry name" value="Prokaryotic type KH domain (KH-domain type II)"/>
    <property type="match status" value="1"/>
</dbReference>
<dbReference type="SUPFAM" id="SSF54821">
    <property type="entry name" value="Ribosomal protein S3 C-terminal domain"/>
    <property type="match status" value="1"/>
</dbReference>
<dbReference type="PROSITE" id="PS50823">
    <property type="entry name" value="KH_TYPE_2"/>
    <property type="match status" value="1"/>
</dbReference>
<dbReference type="PROSITE" id="PS00548">
    <property type="entry name" value="RIBOSOMAL_S3"/>
    <property type="match status" value="1"/>
</dbReference>
<comment type="function">
    <text evidence="1">Binds the lower part of the 30S subunit head. Binds mRNA in the 70S ribosome, positioning it for translation.</text>
</comment>
<comment type="subunit">
    <text evidence="1">Part of the 30S ribosomal subunit. Forms a tight complex with proteins S10 and S14.</text>
</comment>
<comment type="similarity">
    <text evidence="1">Belongs to the universal ribosomal protein uS3 family.</text>
</comment>
<evidence type="ECO:0000255" key="1">
    <source>
        <dbReference type="HAMAP-Rule" id="MF_01309"/>
    </source>
</evidence>
<evidence type="ECO:0000305" key="2"/>
<organism>
    <name type="scientific">Chlamydia felis (strain Fe/C-56)</name>
    <name type="common">Chlamydophila felis</name>
    <dbReference type="NCBI Taxonomy" id="264202"/>
    <lineage>
        <taxon>Bacteria</taxon>
        <taxon>Pseudomonadati</taxon>
        <taxon>Chlamydiota</taxon>
        <taxon>Chlamydiia</taxon>
        <taxon>Chlamydiales</taxon>
        <taxon>Chlamydiaceae</taxon>
        <taxon>Chlamydia/Chlamydophila group</taxon>
        <taxon>Chlamydia</taxon>
    </lineage>
</organism>
<feature type="chain" id="PRO_0000293771" description="Small ribosomal subunit protein uS3">
    <location>
        <begin position="1"/>
        <end position="223"/>
    </location>
</feature>
<feature type="domain" description="KH type-2" evidence="1">
    <location>
        <begin position="39"/>
        <end position="117"/>
    </location>
</feature>
<protein>
    <recommendedName>
        <fullName evidence="1">Small ribosomal subunit protein uS3</fullName>
    </recommendedName>
    <alternativeName>
        <fullName evidence="2">30S ribosomal protein S3</fullName>
    </alternativeName>
</protein>
<proteinExistence type="inferred from homology"/>
<gene>
    <name evidence="1" type="primary">rpsC</name>
    <name evidence="1" type="synonym">rps3</name>
    <name type="ordered locus">CF0907</name>
</gene>
<reference key="1">
    <citation type="journal article" date="2006" name="DNA Res.">
        <title>Genome sequence of the cat pathogen, Chlamydophila felis.</title>
        <authorList>
            <person name="Azuma Y."/>
            <person name="Hirakawa H."/>
            <person name="Yamashita A."/>
            <person name="Cai Y."/>
            <person name="Rahman M.A."/>
            <person name="Suzuki H."/>
            <person name="Mitaku S."/>
            <person name="Toh H."/>
            <person name="Goto S."/>
            <person name="Murakami T."/>
            <person name="Sugi K."/>
            <person name="Hayashi H."/>
            <person name="Fukushi H."/>
            <person name="Hattori M."/>
            <person name="Kuhara S."/>
            <person name="Shirai M."/>
        </authorList>
    </citation>
    <scope>NUCLEOTIDE SEQUENCE [LARGE SCALE GENOMIC DNA]</scope>
    <source>
        <strain>Fe/C-56</strain>
    </source>
</reference>
<sequence>MGQKGCPIGFRTGVTKKWRSLWYGNKQEFGKFLIEDVKIREHLRKKPSCQGAAGFVVRRMSGKIEVTIQTARPGLVIGKKGAEVDLLKEELRKLTGKEVWVEIAEIKRPELNAKLVADNIARQIERRVSFRRAMKKAMQSVMEAGAIGVKIQVSGRLAGAEIARSEWYKNGRVPLHTLRADIDYATASAETTYGIIGVKVWINLGEKTSTANASAGSAVSTAQ</sequence>
<accession>Q252V9</accession>
<name>RS3_CHLFF</name>